<gene>
    <name evidence="1" type="primary">tat</name>
</gene>
<keyword id="KW-0007">Acetylation</keyword>
<keyword id="KW-0010">Activator</keyword>
<keyword id="KW-0014">AIDS</keyword>
<keyword id="KW-0025">Alternative splicing</keyword>
<keyword id="KW-0053">Apoptosis</keyword>
<keyword id="KW-1035">Host cytoplasm</keyword>
<keyword id="KW-1048">Host nucleus</keyword>
<keyword id="KW-0945">Host-virus interaction</keyword>
<keyword id="KW-1090">Inhibition of host innate immune response by virus</keyword>
<keyword id="KW-1114">Inhibition of host interferon signaling pathway by virus</keyword>
<keyword id="KW-0922">Interferon antiviral system evasion</keyword>
<keyword id="KW-1017">Isopeptide bond</keyword>
<keyword id="KW-0479">Metal-binding</keyword>
<keyword id="KW-0488">Methylation</keyword>
<keyword id="KW-1122">Modulation of host chromatin by virus</keyword>
<keyword id="KW-1126">Modulation of host PP1 activity by virus</keyword>
<keyword id="KW-0597">Phosphoprotein</keyword>
<keyword id="KW-0694">RNA-binding</keyword>
<keyword id="KW-0964">Secreted</keyword>
<keyword id="KW-0804">Transcription</keyword>
<keyword id="KW-0805">Transcription regulation</keyword>
<keyword id="KW-0832">Ubl conjugation</keyword>
<keyword id="KW-0899">Viral immunoevasion</keyword>
<keyword id="KW-0862">Zinc</keyword>
<organism>
    <name type="scientific">Human immunodeficiency virus type 1 group M subtype B (isolate SF33)</name>
    <name type="common">HIV-1</name>
    <dbReference type="NCBI Taxonomy" id="11690"/>
    <lineage>
        <taxon>Viruses</taxon>
        <taxon>Riboviria</taxon>
        <taxon>Pararnavirae</taxon>
        <taxon>Artverviricota</taxon>
        <taxon>Revtraviricetes</taxon>
        <taxon>Ortervirales</taxon>
        <taxon>Retroviridae</taxon>
        <taxon>Orthoretrovirinae</taxon>
        <taxon>Lentivirus</taxon>
        <taxon>Human immunodeficiency virus type 1</taxon>
    </lineage>
</organism>
<name>TAT_HV1S3</name>
<sequence>MEPVDPNLEPWKHPGSQPRTACTNCYCKKCCFHCQVCFITKGLGISYGRKKRRQRQRAPDSSQNHQDSLSKQPSSQPRGDPTGPKESKKEVERETETDPLD</sequence>
<accession>P19552</accession>
<dbReference type="EMBL" id="AY352275">
    <property type="protein sequence ID" value="AAQ17029.1"/>
    <property type="molecule type" value="Genomic_DNA"/>
</dbReference>
<dbReference type="SMR" id="P19552"/>
<dbReference type="Proteomes" id="UP000118752">
    <property type="component" value="Genome"/>
</dbReference>
<dbReference type="GO" id="GO:0005576">
    <property type="term" value="C:extracellular region"/>
    <property type="evidence" value="ECO:0007669"/>
    <property type="project" value="UniProtKB-SubCell"/>
</dbReference>
<dbReference type="GO" id="GO:0030430">
    <property type="term" value="C:host cell cytoplasm"/>
    <property type="evidence" value="ECO:0007669"/>
    <property type="project" value="UniProtKB-SubCell"/>
</dbReference>
<dbReference type="GO" id="GO:0044196">
    <property type="term" value="C:host cell nucleolus"/>
    <property type="evidence" value="ECO:0007669"/>
    <property type="project" value="UniProtKB-SubCell"/>
</dbReference>
<dbReference type="GO" id="GO:0042805">
    <property type="term" value="F:actinin binding"/>
    <property type="evidence" value="ECO:0007669"/>
    <property type="project" value="UniProtKB-UniRule"/>
</dbReference>
<dbReference type="GO" id="GO:0030332">
    <property type="term" value="F:cyclin binding"/>
    <property type="evidence" value="ECO:0007669"/>
    <property type="project" value="UniProtKB-UniRule"/>
</dbReference>
<dbReference type="GO" id="GO:0046872">
    <property type="term" value="F:metal ion binding"/>
    <property type="evidence" value="ECO:0007669"/>
    <property type="project" value="UniProtKB-UniRule"/>
</dbReference>
<dbReference type="GO" id="GO:0019904">
    <property type="term" value="F:protein domain specific binding"/>
    <property type="evidence" value="ECO:0007669"/>
    <property type="project" value="UniProtKB-UniRule"/>
</dbReference>
<dbReference type="GO" id="GO:0004865">
    <property type="term" value="F:protein serine/threonine phosphatase inhibitor activity"/>
    <property type="evidence" value="ECO:0007669"/>
    <property type="project" value="UniProtKB-KW"/>
</dbReference>
<dbReference type="GO" id="GO:0001070">
    <property type="term" value="F:RNA-binding transcription regulator activity"/>
    <property type="evidence" value="ECO:0007669"/>
    <property type="project" value="UniProtKB-UniRule"/>
</dbReference>
<dbReference type="GO" id="GO:1990970">
    <property type="term" value="F:trans-activation response element binding"/>
    <property type="evidence" value="ECO:0007669"/>
    <property type="project" value="UniProtKB-UniRule"/>
</dbReference>
<dbReference type="GO" id="GO:0006351">
    <property type="term" value="P:DNA-templated transcription"/>
    <property type="evidence" value="ECO:0007669"/>
    <property type="project" value="UniProtKB-UniRule"/>
</dbReference>
<dbReference type="GO" id="GO:0032968">
    <property type="term" value="P:positive regulation of transcription elongation by RNA polymerase II"/>
    <property type="evidence" value="ECO:0007669"/>
    <property type="project" value="UniProtKB-UniRule"/>
</dbReference>
<dbReference type="GO" id="GO:0050434">
    <property type="term" value="P:positive regulation of viral transcription"/>
    <property type="evidence" value="ECO:0007669"/>
    <property type="project" value="UniProtKB-UniRule"/>
</dbReference>
<dbReference type="GO" id="GO:0039525">
    <property type="term" value="P:symbiont-mediated perturbation of host chromatin organization"/>
    <property type="evidence" value="ECO:0007669"/>
    <property type="project" value="UniProtKB-UniRule"/>
</dbReference>
<dbReference type="GO" id="GO:0052170">
    <property type="term" value="P:symbiont-mediated suppression of host innate immune response"/>
    <property type="evidence" value="ECO:0007669"/>
    <property type="project" value="UniProtKB-KW"/>
</dbReference>
<dbReference type="GO" id="GO:0039606">
    <property type="term" value="P:symbiont-mediated suppression of host translation initiation"/>
    <property type="evidence" value="ECO:0007669"/>
    <property type="project" value="UniProtKB-KW"/>
</dbReference>
<dbReference type="GO" id="GO:0039502">
    <property type="term" value="P:symbiont-mediated suppression of host type I interferon-mediated signaling pathway"/>
    <property type="evidence" value="ECO:0007669"/>
    <property type="project" value="UniProtKB-UniRule"/>
</dbReference>
<dbReference type="Gene3D" id="4.10.20.10">
    <property type="entry name" value="Tat domain"/>
    <property type="match status" value="1"/>
</dbReference>
<dbReference type="HAMAP" id="MF_04079">
    <property type="entry name" value="HIV_TAT"/>
    <property type="match status" value="1"/>
</dbReference>
<dbReference type="InterPro" id="IPR001831">
    <property type="entry name" value="IV_Tat"/>
</dbReference>
<dbReference type="InterPro" id="IPR036963">
    <property type="entry name" value="Tat_dom_sf"/>
</dbReference>
<dbReference type="Pfam" id="PF00539">
    <property type="entry name" value="Tat"/>
    <property type="match status" value="1"/>
</dbReference>
<dbReference type="PRINTS" id="PR00055">
    <property type="entry name" value="HIVTATDOMAIN"/>
</dbReference>
<feature type="chain" id="PRO_0000085350" description="Protein Tat">
    <location>
        <begin position="1"/>
        <end position="101"/>
    </location>
</feature>
<feature type="region of interest" description="Transactivation" evidence="1">
    <location>
        <begin position="1"/>
        <end position="48"/>
    </location>
</feature>
<feature type="region of interest" description="Interaction with human CREBBP" evidence="1">
    <location>
        <begin position="1"/>
        <end position="24"/>
    </location>
</feature>
<feature type="region of interest" description="Cysteine-rich" evidence="1">
    <location>
        <begin position="22"/>
        <end position="37"/>
    </location>
</feature>
<feature type="region of interest" description="Core" evidence="1">
    <location>
        <begin position="38"/>
        <end position="48"/>
    </location>
</feature>
<feature type="region of interest" description="Disordered" evidence="2">
    <location>
        <begin position="48"/>
        <end position="101"/>
    </location>
</feature>
<feature type="region of interest" description="Interaction with the host capping enzyme RNGTT" evidence="1">
    <location>
        <begin position="49"/>
        <end position="86"/>
    </location>
</feature>
<feature type="short sequence motif" description="Nuclear localization signal, RNA-binding (TAR), and protein transduction" evidence="1">
    <location>
        <begin position="49"/>
        <end position="57"/>
    </location>
</feature>
<feature type="short sequence motif" description="Cell attachment site" evidence="1">
    <location>
        <begin position="78"/>
        <end position="80"/>
    </location>
</feature>
<feature type="compositionally biased region" description="Polar residues" evidence="2">
    <location>
        <begin position="59"/>
        <end position="77"/>
    </location>
</feature>
<feature type="compositionally biased region" description="Basic and acidic residues" evidence="2">
    <location>
        <begin position="83"/>
        <end position="101"/>
    </location>
</feature>
<feature type="binding site" evidence="1">
    <location>
        <position position="22"/>
    </location>
    <ligand>
        <name>Zn(2+)</name>
        <dbReference type="ChEBI" id="CHEBI:29105"/>
        <label>1</label>
    </ligand>
</feature>
<feature type="binding site" evidence="1">
    <location>
        <position position="25"/>
    </location>
    <ligand>
        <name>Zn(2+)</name>
        <dbReference type="ChEBI" id="CHEBI:29105"/>
        <label>2</label>
    </ligand>
</feature>
<feature type="binding site" evidence="1">
    <location>
        <position position="27"/>
    </location>
    <ligand>
        <name>Zn(2+)</name>
        <dbReference type="ChEBI" id="CHEBI:29105"/>
        <label>2</label>
    </ligand>
</feature>
<feature type="binding site" evidence="1">
    <location>
        <position position="30"/>
    </location>
    <ligand>
        <name>Zn(2+)</name>
        <dbReference type="ChEBI" id="CHEBI:29105"/>
        <label>2</label>
    </ligand>
</feature>
<feature type="binding site" evidence="1">
    <location>
        <position position="33"/>
    </location>
    <ligand>
        <name>Zn(2+)</name>
        <dbReference type="ChEBI" id="CHEBI:29105"/>
        <label>1</label>
    </ligand>
</feature>
<feature type="binding site" evidence="1">
    <location>
        <position position="34"/>
    </location>
    <ligand>
        <name>Zn(2+)</name>
        <dbReference type="ChEBI" id="CHEBI:29105"/>
        <label>1</label>
    </ligand>
</feature>
<feature type="binding site" evidence="1">
    <location>
        <position position="37"/>
    </location>
    <ligand>
        <name>Zn(2+)</name>
        <dbReference type="ChEBI" id="CHEBI:29105"/>
        <label>1</label>
    </ligand>
</feature>
<feature type="site" description="Essential for Tat translocation through the endosomal membrane" evidence="1">
    <location>
        <position position="11"/>
    </location>
</feature>
<feature type="modified residue" description="N6-acetyllysine; by host PCAF" evidence="1">
    <location>
        <position position="28"/>
    </location>
</feature>
<feature type="modified residue" description="N6-acetyllysine; by host EP300 and GCN5L2" evidence="1">
    <location>
        <position position="50"/>
    </location>
</feature>
<feature type="modified residue" description="N6-acetyllysine; by host EP300 and GCN5L2" evidence="1">
    <location>
        <position position="51"/>
    </location>
</feature>
<feature type="modified residue" description="Asymmetric dimethylarginine; by host PRMT6" evidence="1">
    <location>
        <position position="52"/>
    </location>
</feature>
<feature type="modified residue" description="Asymmetric dimethylarginine; by host PRMT6" evidence="1">
    <location>
        <position position="53"/>
    </location>
</feature>
<feature type="cross-link" description="Glycyl lysine isopeptide (Lys-Gly) (interchain with G-Cter in ubiquitin)" evidence="1">
    <location>
        <position position="71"/>
    </location>
</feature>
<feature type="splice variant" id="VSP_022428" description="In isoform Short.">
    <location>
        <begin position="73"/>
        <end position="101"/>
    </location>
</feature>
<protein>
    <recommendedName>
        <fullName evidence="1">Protein Tat</fullName>
    </recommendedName>
    <alternativeName>
        <fullName evidence="1">Transactivating regulatory protein</fullName>
    </alternativeName>
</protein>
<proteinExistence type="inferred from homology"/>
<comment type="function">
    <text evidence="1">Transcriptional activator that increases RNA Pol II processivity, thereby increasing the level of full-length viral transcripts. Recognizes a hairpin structure at the 5'-LTR of the nascent viral mRNAs referred to as the transactivation responsive RNA element (TAR) and recruits the cyclin T1-CDK9 complex (P-TEFb complex) that will in turn hyperphosphorylate the RNA polymerase II to allow efficient elongation. The CDK9 component of P-TEFb and other Tat-activated kinases hyperphosphorylate the C-terminus of RNA Pol II that becomes stabilized and much more processive. Other factors such as HTATSF1/Tat-SF1, SUPT5H/SPT5, and HTATIP2 are also important for Tat's function. Besides its effect on RNA Pol II processivity, Tat induces chromatin remodeling of proviral genes by recruiting the histone acetyltransferases (HATs) CREBBP, EP300 and PCAF to the chromatin. This also contributes to the increase in proviral transcription rate, especially when the provirus integrates in transcriptionally silent region of the host genome. To ensure maximal activation of the LTR, Tat mediates nuclear translocation of NF-kappa-B by interacting with host RELA. Through its interaction with host TBP, Tat may also modulate transcription initiation. Tat can reactivate a latently infected cell by penetrating in it and transactivating its LTR promoter. In the cytoplasm, Tat is thought to act as a translational activator of HIV-1 mRNAs.</text>
</comment>
<comment type="function">
    <text evidence="1">Extracellular circulating Tat can be endocytosed by surrounding uninfected cells via the binding to several surface receptors such as CD26, CXCR4, heparan sulfate proteoglycans (HSPG) or LDLR. Neurons are rarely infected, but they internalize Tat via their LDLR. Through its interaction with nuclear HATs, Tat is potentially able to control the acetylation-dependent cellular gene expression. Modulates the expression of many cellular genes involved in cell survival, proliferation or in coding for cytokines or cytokine receptors. Tat plays a role in T-cell and neurons apoptosis. Tat induced neurotoxicity and apoptosis probably contribute to neuroAIDS. Circulating Tat also acts as a chemokine-like and/or growth factor-like molecule that binds to specific receptors on the surface of the cells, affecting many cellular pathways. In the vascular system, Tat binds to ITGAV/ITGB3 and ITGA5/ITGB1 integrins dimers at the surface of endothelial cells and competes with bFGF for heparin-binding sites, leading to an excess of soluble bFGF.</text>
</comment>
<comment type="subunit">
    <text evidence="1">Interacts with host CCNT1. Associates with the P-TEFb complex composed at least of Tat, P-TEFb (CDK9 and CCNT1), TAR RNA, RNA Pol II. Recruits the HATs CREBBP, TAF1/TFIID, EP300, PCAF and GCN5L2. Interacts with host KAT5/Tip60; this interaction targets the latter to degradation. Interacts with the host deacetylase SIRT1. Interacts with host capping enzyme RNGTT; this interaction stimulates RNGTT. Binds to host KDR, and to the host integrins ITGAV/ITGB3 and ITGA5/ITGB1. Interacts with host KPNB1/importin beta-1 without previous binding to KPNA1/importin alpha-1. Interacts with EIF2AK2. Interacts with host nucleosome assembly protein NAP1L1; this interaction may be required for the transport of Tat within the nucleus, since the two proteins interact at the nuclear rim. Interacts with host C1QBP/SF2P32; this interaction involves lysine-acetylated Tat. Interacts with the host chemokine receptors CCR2, CCR3 and CXCR4. Interacts with host DPP4/CD26; this interaction may trigger an anti-proliferative effect. Interacts with host LDLR. Interacts with the host extracellular matrix metalloproteinase MMP1. Interacts with host PRMT6; this interaction mediates Tat's methylation. Interacts with, and is ubiquitinated by MDM2/Hdm2. Interacts with host PSMC3 and HTATIP2. Interacts with STAB1; this interaction may overcome SATB1-mediated repression of IL2 and IL2RA (interleukin) in T cells by binding to the same domain than HDAC1. Interacts (when acetylated) with human CDK13, thereby increasing HIV-1 mRNA splicing and promoting the production of the doubly spliced HIV-1 protein Nef. Interacts with host TBP; this interaction modulates the activity of transcriptional pre-initiation complex. Interacts with host RELA. Interacts with host PLSCR1; this interaction negatively regulates Tat transactivation activity by altering its subcellular distribution.</text>
</comment>
<comment type="subcellular location">
    <subcellularLocation>
        <location evidence="1">Host nucleus</location>
        <location evidence="1">Host nucleolus</location>
    </subcellularLocation>
    <subcellularLocation>
        <location evidence="1">Host cytoplasm</location>
    </subcellularLocation>
    <subcellularLocation>
        <location evidence="1">Secreted</location>
    </subcellularLocation>
    <text evidence="1">Probably localizes to both nuclear and nucleolar compartments. Nuclear localization is mediated through the interaction of the nuclear localization signal with importin KPNB1. Secretion occurs through a Golgi-independent pathway. Tat is released from infected cells to the extracellular space where it remains associated to the cell membrane, or is secreted into the cerebrospinal fluid and sera. Extracellular Tat can be endocytosed by surrounding uninfected cells via binding to several receptors depending on the cell type.</text>
</comment>
<comment type="alternative products">
    <event type="alternative splicing"/>
    <isoform>
        <id>P19552-1</id>
        <name>Long</name>
        <sequence type="displayed"/>
    </isoform>
    <isoform>
        <id>P19552-2</id>
        <name>Short</name>
        <sequence type="described" ref="VSP_022428"/>
    </isoform>
</comment>
<comment type="domain">
    <text evidence="1">The cell attachment site mediates the interaction with ITGAV/ITGB3 and ITGA5/ITGB1 integrins, leading to vascular cell migration and invasion. This interaction also provides endothelial cells with the adhesion signal they require to grow in response to mitogens.</text>
</comment>
<comment type="domain">
    <text evidence="1">The Cys-rich region may bind 2 zinc ions. This region is involved in binding to KAT5.</text>
</comment>
<comment type="domain">
    <text evidence="1">The transactivation domain mediates the interaction with CCNT1, GCN5L2, and MDM2.</text>
</comment>
<comment type="domain">
    <text evidence="1">The Arg-rich RNA-binding region binds the TAR RNA. This region also mediates the nuclear localization through direct binding to KPNB1 and is involved in Tat's transfer across cell membranes (protein transduction). The same region is required for the interaction with EP300, PCAF, EIF2AK2 and KDR.</text>
</comment>
<comment type="PTM">
    <text evidence="1">Asymmetrical arginine methylation by host PRMT6 seems to diminish the transactivation capacity of Tat and affects the interaction with host CCNT1.</text>
</comment>
<comment type="PTM">
    <text evidence="1">Acetylation by EP300, CREBBP, GCN5L2/GCN5 and PCAF regulates the transactivation activity of Tat. EP300-mediated acetylation of Lys-50 promotes dissociation of Tat from the TAR RNA through the competitive binding to PCAF's bromodomain. In addition, the non-acetylated Tat's N-terminus can also interact with PCAF. PCAF-mediated acetylation of Lys-28 enhances Tat's binding to CCNT1. Lys-50 is deacetylated by SIRT1.</text>
</comment>
<comment type="PTM">
    <text evidence="1">Polyubiquitination by host MDM2 does not target Tat to degradation, but activates its transactivation function and fosters interaction with CCNT1 and TAR RNA.</text>
</comment>
<comment type="PTM">
    <text evidence="1">Phosphorylated by EIF2AK2 on serine and threonine residues adjacent to the basic region important for TAR RNA binding and function. Phosphorylation of Tat by EIF2AK2 is dependent on the prior activation of EIF2AK2 by dsRNA.</text>
</comment>
<comment type="miscellaneous">
    <text evidence="1">HIV-1 lineages are divided in three main groups, M (for Major), O (for Outlier), and N (for New, or Non-M, Non-O). The vast majority of strains found worldwide belong to the group M. Group O seems to be endemic to and largely confined to Cameroon and neighboring countries in West Central Africa, where these viruses represent a small minority of HIV-1 strains. The group N is represented by a limited number of isolates from Cameroonian persons. The group M is further subdivided in 9 clades or subtypes (A to D, F to H, J and K).</text>
</comment>
<comment type="miscellaneous">
    <molecule>Isoform Short</molecule>
    <text evidence="3">Expressed in the late stage of the infection cycle, when unspliced viral RNAs are exported to the cytoplasm by the viral Rev protein.</text>
</comment>
<comment type="similarity">
    <text evidence="1">Belongs to the lentiviruses Tat family.</text>
</comment>
<organismHost>
    <name type="scientific">Homo sapiens</name>
    <name type="common">Human</name>
    <dbReference type="NCBI Taxonomy" id="9606"/>
</organismHost>
<evidence type="ECO:0000255" key="1">
    <source>
        <dbReference type="HAMAP-Rule" id="MF_04079"/>
    </source>
</evidence>
<evidence type="ECO:0000256" key="2">
    <source>
        <dbReference type="SAM" id="MobiDB-lite"/>
    </source>
</evidence>
<evidence type="ECO:0000305" key="3"/>
<reference key="1">
    <citation type="journal article" date="1990" name="J. Virol.">
        <title>Human immunodeficiency virus type 1 cellular host range, replication, and cytopathicity are linked to the envelope region of the viral genome.</title>
        <authorList>
            <person name="York-Higgins D."/>
            <person name="Cheng-Mayer C."/>
            <person name="Bauer D."/>
            <person name="Levy J.A."/>
            <person name="Dina D."/>
        </authorList>
    </citation>
    <scope>NUCLEOTIDE SEQUENCE [GENOMIC DNA]</scope>
</reference>
<reference key="2">
    <citation type="journal article" date="2005" name="Microbes Infect.">
        <title>Decoding Tat: the biology of HIV Tat posttranslational modifications.</title>
        <authorList>
            <person name="Hetzer C."/>
            <person name="Dormeyer W."/>
            <person name="Schnolzer M."/>
            <person name="Ott M."/>
        </authorList>
    </citation>
    <scope>REVIEW</scope>
    <scope>ALTERNATIVE SPLICING</scope>
</reference>
<reference key="3">
    <citation type="journal article" date="2006" name="Front. Biosci.">
        <title>The multiple functions of HIV-1 Tat: proliferation versus apoptosis.</title>
        <authorList>
            <person name="Peruzzi F."/>
        </authorList>
    </citation>
    <scope>REVIEW</scope>
</reference>
<reference key="4">
    <citation type="journal article" date="2006" name="Microbes Infect.">
        <title>HIV tat and neurotoxicity.</title>
        <authorList>
            <person name="King J.E."/>
            <person name="Eugenin E.A."/>
            <person name="Buckner C.M."/>
            <person name="Berman J.W."/>
        </authorList>
    </citation>
    <scope>REVIEW</scope>
</reference>